<proteinExistence type="inferred from homology"/>
<organism>
    <name type="scientific">Methanosarcina mazei (strain ATCC BAA-159 / DSM 3647 / Goe1 / Go1 / JCM 11833 / OCM 88)</name>
    <name type="common">Methanosarcina frisia</name>
    <dbReference type="NCBI Taxonomy" id="192952"/>
    <lineage>
        <taxon>Archaea</taxon>
        <taxon>Methanobacteriati</taxon>
        <taxon>Methanobacteriota</taxon>
        <taxon>Stenosarchaea group</taxon>
        <taxon>Methanomicrobia</taxon>
        <taxon>Methanosarcinales</taxon>
        <taxon>Methanosarcinaceae</taxon>
        <taxon>Methanosarcina</taxon>
    </lineage>
</organism>
<evidence type="ECO:0000256" key="1">
    <source>
        <dbReference type="SAM" id="MobiDB-lite"/>
    </source>
</evidence>
<evidence type="ECO:0000305" key="2"/>
<dbReference type="EMBL" id="AE008384">
    <property type="protein sequence ID" value="AAM32373.1"/>
    <property type="molecule type" value="Genomic_DNA"/>
</dbReference>
<dbReference type="RefSeq" id="WP_011034588.1">
    <property type="nucleotide sequence ID" value="NC_003901.1"/>
</dbReference>
<dbReference type="SMR" id="Q8PTN6"/>
<dbReference type="KEGG" id="mma:MM_2677"/>
<dbReference type="PATRIC" id="fig|192952.21.peg.3084"/>
<dbReference type="eggNOG" id="arCOG14345">
    <property type="taxonomic scope" value="Archaea"/>
</dbReference>
<dbReference type="HOGENOM" id="CLU_135567_3_1_2"/>
<dbReference type="Proteomes" id="UP000000595">
    <property type="component" value="Chromosome"/>
</dbReference>
<dbReference type="Gene3D" id="1.10.1470.10">
    <property type="entry name" value="YjbJ"/>
    <property type="match status" value="1"/>
</dbReference>
<dbReference type="InterPro" id="IPR008462">
    <property type="entry name" value="CsbD"/>
</dbReference>
<dbReference type="InterPro" id="IPR036629">
    <property type="entry name" value="YjbJ_sf"/>
</dbReference>
<dbReference type="Pfam" id="PF05532">
    <property type="entry name" value="CsbD"/>
    <property type="match status" value="1"/>
</dbReference>
<dbReference type="SUPFAM" id="SSF69047">
    <property type="entry name" value="Hypothetical protein YjbJ"/>
    <property type="match status" value="1"/>
</dbReference>
<name>Y2677_METMA</name>
<protein>
    <recommendedName>
        <fullName>UPF0337 protein MM_2677</fullName>
    </recommendedName>
</protein>
<sequence>MKEGTKEEMEGKFSKAKGEIKESAGEMTGDIEMEAKGEAEKRKGEAQEKVGKIRKEFEK</sequence>
<reference key="1">
    <citation type="journal article" date="2002" name="J. Mol. Microbiol. Biotechnol.">
        <title>The genome of Methanosarcina mazei: evidence for lateral gene transfer between Bacteria and Archaea.</title>
        <authorList>
            <person name="Deppenmeier U."/>
            <person name="Johann A."/>
            <person name="Hartsch T."/>
            <person name="Merkl R."/>
            <person name="Schmitz R.A."/>
            <person name="Martinez-Arias R."/>
            <person name="Henne A."/>
            <person name="Wiezer A."/>
            <person name="Baeumer S."/>
            <person name="Jacobi C."/>
            <person name="Brueggemann H."/>
            <person name="Lienard T."/>
            <person name="Christmann A."/>
            <person name="Boemecke M."/>
            <person name="Steckel S."/>
            <person name="Bhattacharyya A."/>
            <person name="Lykidis A."/>
            <person name="Overbeek R."/>
            <person name="Klenk H.-P."/>
            <person name="Gunsalus R.P."/>
            <person name="Fritz H.-J."/>
            <person name="Gottschalk G."/>
        </authorList>
    </citation>
    <scope>NUCLEOTIDE SEQUENCE [LARGE SCALE GENOMIC DNA]</scope>
    <source>
        <strain>ATCC BAA-159 / DSM 3647 / Goe1 / Go1 / JCM 11833 / OCM 88</strain>
    </source>
</reference>
<gene>
    <name type="ordered locus">MM_2677</name>
</gene>
<comment type="similarity">
    <text evidence="2">Belongs to the UPF0337 (CsbD) family.</text>
</comment>
<accession>Q8PTN6</accession>
<feature type="chain" id="PRO_0000210063" description="UPF0337 protein MM_2677">
    <location>
        <begin position="1"/>
        <end position="59"/>
    </location>
</feature>
<feature type="region of interest" description="Disordered" evidence="1">
    <location>
        <begin position="1"/>
        <end position="59"/>
    </location>
</feature>
<feature type="compositionally biased region" description="Basic and acidic residues" evidence="1">
    <location>
        <begin position="1"/>
        <end position="24"/>
    </location>
</feature>
<feature type="compositionally biased region" description="Basic and acidic residues" evidence="1">
    <location>
        <begin position="33"/>
        <end position="59"/>
    </location>
</feature>